<gene>
    <name evidence="4" type="primary">DGD2</name>
    <name evidence="6" type="ordered locus">GLYMA_18G228900</name>
</gene>
<name>DGDG2_SOYBN</name>
<reference key="1">
    <citation type="journal article" date="2004" name="J. Biol. Chem.">
        <title>The galactolipid digalactosyldiacylglycerol accumulates in the peribacteroid membrane of nitrogen-fixing nodules of Soybean and Lotus.</title>
        <authorList>
            <person name="Gaude N."/>
            <person name="Tippmann H."/>
            <person name="Flemetakis E."/>
            <person name="Katinakis P."/>
            <person name="Udvardi M."/>
            <person name="Doermann P."/>
        </authorList>
    </citation>
    <scope>NUCLEOTIDE SEQUENCE [MRNA]</scope>
    <scope>FUNCTION</scope>
    <scope>SUBCELLULAR LOCATION</scope>
    <scope>TISSUE SPECIFICITY</scope>
    <scope>DEVELOPMENTAL STAGE</scope>
    <scope>INDUCTION</scope>
    <source>
        <strain>cv. Stevens</strain>
    </source>
</reference>
<reference key="2">
    <citation type="journal article" date="2010" name="Nature">
        <title>Genome sequence of the palaeopolyploid soybean.</title>
        <authorList>
            <person name="Schmutz J."/>
            <person name="Cannon S.B."/>
            <person name="Schlueter J."/>
            <person name="Ma J."/>
            <person name="Mitros T."/>
            <person name="Nelson W."/>
            <person name="Hyten D.L."/>
            <person name="Song Q."/>
            <person name="Thelen J.J."/>
            <person name="Cheng J."/>
            <person name="Xu D."/>
            <person name="Hellsten U."/>
            <person name="May G.D."/>
            <person name="Yu Y."/>
            <person name="Sakurai T."/>
            <person name="Umezawa T."/>
            <person name="Bhattacharyya M.K."/>
            <person name="Sandhu D."/>
            <person name="Valliyodan B."/>
            <person name="Lindquist E."/>
            <person name="Peto M."/>
            <person name="Grant D."/>
            <person name="Shu S."/>
            <person name="Goodstein D."/>
            <person name="Barry K."/>
            <person name="Futrell-Griggs M."/>
            <person name="Abernathy B."/>
            <person name="Du J."/>
            <person name="Tian Z."/>
            <person name="Zhu L."/>
            <person name="Gill N."/>
            <person name="Joshi T."/>
            <person name="Libault M."/>
            <person name="Sethuraman A."/>
            <person name="Zhang X.-C."/>
            <person name="Shinozaki K."/>
            <person name="Nguyen H.T."/>
            <person name="Wing R.A."/>
            <person name="Cregan P."/>
            <person name="Specht J."/>
            <person name="Grimwood J."/>
            <person name="Rokhsar D."/>
            <person name="Stacey G."/>
            <person name="Shoemaker R.C."/>
            <person name="Jackson S.A."/>
        </authorList>
    </citation>
    <scope>NUCLEOTIDE SEQUENCE [LARGE SCALE GENOMIC DNA]</scope>
    <source>
        <strain>cv. Williams 82</strain>
        <tissue>Callus</tissue>
    </source>
</reference>
<evidence type="ECO:0000250" key="1">
    <source>
        <dbReference type="UniProtKB" id="Q8W1S1"/>
    </source>
</evidence>
<evidence type="ECO:0000255" key="2"/>
<evidence type="ECO:0000269" key="3">
    <source>
    </source>
</evidence>
<evidence type="ECO:0000303" key="4">
    <source>
    </source>
</evidence>
<evidence type="ECO:0000305" key="5"/>
<evidence type="ECO:0000312" key="6">
    <source>
        <dbReference type="EMBL" id="KRH00685.1"/>
    </source>
</evidence>
<organism>
    <name type="scientific">Glycine max</name>
    <name type="common">Soybean</name>
    <name type="synonym">Glycine hispida</name>
    <dbReference type="NCBI Taxonomy" id="3847"/>
    <lineage>
        <taxon>Eukaryota</taxon>
        <taxon>Viridiplantae</taxon>
        <taxon>Streptophyta</taxon>
        <taxon>Embryophyta</taxon>
        <taxon>Tracheophyta</taxon>
        <taxon>Spermatophyta</taxon>
        <taxon>Magnoliopsida</taxon>
        <taxon>eudicotyledons</taxon>
        <taxon>Gunneridae</taxon>
        <taxon>Pentapetalae</taxon>
        <taxon>rosids</taxon>
        <taxon>fabids</taxon>
        <taxon>Fabales</taxon>
        <taxon>Fabaceae</taxon>
        <taxon>Papilionoideae</taxon>
        <taxon>50 kb inversion clade</taxon>
        <taxon>NPAAA clade</taxon>
        <taxon>indigoferoid/millettioid clade</taxon>
        <taxon>Phaseoleae</taxon>
        <taxon>Glycine</taxon>
        <taxon>Glycine subgen. Soja</taxon>
    </lineage>
</organism>
<keyword id="KW-0150">Chloroplast</keyword>
<keyword id="KW-0328">Glycosyltransferase</keyword>
<keyword id="KW-0472">Membrane</keyword>
<keyword id="KW-0536">Nodulation</keyword>
<keyword id="KW-0934">Plastid</keyword>
<keyword id="KW-1002">Plastid outer membrane</keyword>
<keyword id="KW-1185">Reference proteome</keyword>
<keyword id="KW-0732">Signal</keyword>
<keyword id="KW-0808">Transferase</keyword>
<proteinExistence type="evidence at transcript level"/>
<accession>Q6DW75</accession>
<accession>A0A0R0F2Z2</accession>
<dbReference type="EC" id="2.4.1.241" evidence="1"/>
<dbReference type="EMBL" id="AY635908">
    <property type="protein sequence ID" value="AAT67421.1"/>
    <property type="molecule type" value="mRNA"/>
</dbReference>
<dbReference type="EMBL" id="CM000851">
    <property type="protein sequence ID" value="KRH00685.1"/>
    <property type="molecule type" value="Genomic_DNA"/>
</dbReference>
<dbReference type="RefSeq" id="NP_001237488.1">
    <property type="nucleotide sequence ID" value="NM_001250559.2"/>
</dbReference>
<dbReference type="RefSeq" id="XP_006601859.1">
    <property type="nucleotide sequence ID" value="XM_006601796.2"/>
</dbReference>
<dbReference type="RefSeq" id="XP_014625733.1">
    <property type="nucleotide sequence ID" value="XM_014770247.3"/>
</dbReference>
<dbReference type="SMR" id="Q6DW75"/>
<dbReference type="FunCoup" id="Q6DW75">
    <property type="interactions" value="1715"/>
</dbReference>
<dbReference type="STRING" id="3847.Q6DW75"/>
<dbReference type="CAZy" id="GT4">
    <property type="family name" value="Glycosyltransferase Family 4"/>
</dbReference>
<dbReference type="PaxDb" id="3847-GLYMA18G46300.1"/>
<dbReference type="EnsemblPlants" id="KRH00685">
    <property type="protein sequence ID" value="KRH00685"/>
    <property type="gene ID" value="GLYMA_18G228900"/>
</dbReference>
<dbReference type="GeneID" id="547762"/>
<dbReference type="Gramene" id="KRH00685">
    <property type="protein sequence ID" value="KRH00685"/>
    <property type="gene ID" value="GLYMA_18G228900"/>
</dbReference>
<dbReference type="KEGG" id="gmx:547762"/>
<dbReference type="eggNOG" id="ENOG502QQEJ">
    <property type="taxonomic scope" value="Eukaryota"/>
</dbReference>
<dbReference type="HOGENOM" id="CLU_011647_1_0_1"/>
<dbReference type="InParanoid" id="Q6DW75"/>
<dbReference type="OMA" id="QAIACFM"/>
<dbReference type="OrthoDB" id="44480at2759"/>
<dbReference type="Proteomes" id="UP000008827">
    <property type="component" value="Chromosome 18"/>
</dbReference>
<dbReference type="GO" id="GO:0009707">
    <property type="term" value="C:chloroplast outer membrane"/>
    <property type="evidence" value="ECO:0000318"/>
    <property type="project" value="GO_Central"/>
</dbReference>
<dbReference type="GO" id="GO:0046481">
    <property type="term" value="F:digalactosyldiacylglycerol synthase activity"/>
    <property type="evidence" value="ECO:0007669"/>
    <property type="project" value="UniProtKB-EC"/>
</dbReference>
<dbReference type="GO" id="GO:0035250">
    <property type="term" value="F:UDP-galactosyltransferase activity"/>
    <property type="evidence" value="ECO:0000318"/>
    <property type="project" value="GO_Central"/>
</dbReference>
<dbReference type="GO" id="GO:0019375">
    <property type="term" value="P:galactolipid biosynthetic process"/>
    <property type="evidence" value="ECO:0000318"/>
    <property type="project" value="GO_Central"/>
</dbReference>
<dbReference type="GO" id="GO:0009877">
    <property type="term" value="P:nodulation"/>
    <property type="evidence" value="ECO:0007669"/>
    <property type="project" value="UniProtKB-KW"/>
</dbReference>
<dbReference type="CDD" id="cd01635">
    <property type="entry name" value="Glycosyltransferase_GTB-type"/>
    <property type="match status" value="1"/>
</dbReference>
<dbReference type="FunFam" id="3.40.50.2000:FF:000084">
    <property type="entry name" value="Digalactosyldiacylglycerol synthase 2 chloroplastic"/>
    <property type="match status" value="1"/>
</dbReference>
<dbReference type="Gene3D" id="3.40.50.2000">
    <property type="entry name" value="Glycogen Phosphorylase B"/>
    <property type="match status" value="1"/>
</dbReference>
<dbReference type="InterPro" id="IPR044525">
    <property type="entry name" value="DGDG1/2"/>
</dbReference>
<dbReference type="InterPro" id="IPR001296">
    <property type="entry name" value="Glyco_trans_1"/>
</dbReference>
<dbReference type="PANTHER" id="PTHR46132">
    <property type="entry name" value="DIGALACTOSYLDIACYLGLYCEROL SYNTHASE 2, CHLOROPLASTIC"/>
    <property type="match status" value="1"/>
</dbReference>
<dbReference type="PANTHER" id="PTHR46132:SF1">
    <property type="entry name" value="DIGALACTOSYLDIACYLGLYCEROL SYNTHASE 2, CHLOROPLASTIC"/>
    <property type="match status" value="1"/>
</dbReference>
<dbReference type="Pfam" id="PF00534">
    <property type="entry name" value="Glycos_transf_1"/>
    <property type="match status" value="1"/>
</dbReference>
<dbReference type="SUPFAM" id="SSF53756">
    <property type="entry name" value="UDP-Glycosyltransferase/glycogen phosphorylase"/>
    <property type="match status" value="1"/>
</dbReference>
<comment type="function">
    <text evidence="3">Involved in the synthesis of diacylglycerol galactolipids that are specifically found in thylakoid and in nodule peribacteroid membranes (PubMed:15159398). Specific for alpha-glycosidic linkages (PubMed:15159398).</text>
</comment>
<comment type="catalytic activity">
    <reaction evidence="1">
        <text>a 1,2-diacyl-3-O-(beta-D-galactosyl)-sn-glycerol + UDP-alpha-D-galactose = a 1,2-diacyl-3-O-[alpha-D-galactosyl-(1-&gt;6)-beta-D-galactosyl]-sn-glycerol + UDP + H(+)</text>
        <dbReference type="Rhea" id="RHEA:10520"/>
        <dbReference type="ChEBI" id="CHEBI:15378"/>
        <dbReference type="ChEBI" id="CHEBI:17615"/>
        <dbReference type="ChEBI" id="CHEBI:28396"/>
        <dbReference type="ChEBI" id="CHEBI:58223"/>
        <dbReference type="ChEBI" id="CHEBI:66914"/>
        <dbReference type="EC" id="2.4.1.241"/>
    </reaction>
</comment>
<comment type="subcellular location">
    <subcellularLocation>
        <location evidence="1">Plastid</location>
        <location evidence="1">Chloroplast outer membrane</location>
    </subcellularLocation>
    <subcellularLocation>
        <location evidence="1">Plastid outer membrane</location>
    </subcellularLocation>
</comment>
<comment type="tissue specificity">
    <text evidence="3">Expressed in leaves, roots and nodules.</text>
</comment>
<comment type="developmental stage">
    <text evidence="3">Very low expression in young nodules, increasing in the later stages of development.</text>
</comment>
<comment type="induction">
    <text evidence="3">Up-regulated in leaves by phosphate deficiency.</text>
</comment>
<comment type="similarity">
    <text evidence="5">Belongs to the glycosyltransferase group 1 family. Glycosyltransferase 4 subfamily.</text>
</comment>
<feature type="signal peptide" evidence="2">
    <location>
        <begin position="1"/>
        <end status="unknown"/>
    </location>
</feature>
<feature type="chain" id="PRO_0000252342" description="Digalactosyldiacylglycerol synthase 2, chloroplastic">
    <location>
        <begin status="unknown"/>
        <end position="463"/>
    </location>
</feature>
<sequence>MDKKEHIAIFTTASLPWLTGTAVNPLFRAAYLAKSGERDVTLVIPWLSLKDQRLVYPNNITFASPSEHEKYICQWLEERVGFTSGFSIQFYPGKFSRDKRSILAVGDISEIIPDKVADIAVLEEPEHLTWYHHGKRWKTKFRLVIGIIHTNYLEYVKREKNGVMQAFLLKYLNNWVVSIYCHKVIRLSAATQDYTGSIICNVHGVNPKFLEIGKKKREQQQKGEHAFTKGAYFIGKMIWSKGYKELLQLLKDHEKELSALEVDLFGSGEDSDEVQKAAEKLELAVRVHPARDHADALFHDYKLFLNPSTTDVVCTTTAEALAMGKIVVCANHPSNDFFKQFPNCWTYDDDDGFVKLTLKALAEQPAQPTDAQRHDLSWEAATKRFLKAADLDKPLERKLSRTTSNFLAASLNLQEKVDEASAYVHHVASGFEVSRRIFGAIPDSLQPDEELRKELGLTDASTK</sequence>
<protein>
    <recommendedName>
        <fullName evidence="4">Digalactosyldiacylglycerol synthase 2, chloroplastic</fullName>
        <shortName evidence="4">GmDGD2</shortName>
        <ecNumber evidence="1">2.4.1.241</ecNumber>
    </recommendedName>
</protein>